<keyword id="KW-0025">Alternative splicing</keyword>
<keyword id="KW-0433">Leucine-rich repeat</keyword>
<keyword id="KW-1185">Reference proteome</keyword>
<keyword id="KW-0677">Repeat</keyword>
<name>LR74A_RAT</name>
<sequence length="479" mass="53227">MDDDDIEPLEYETKDETEAALAPQSSEDTLYCEAEAAPSVEKEKPTREDSETDLEIEDTEKFFSIGQKELYLEACKLVGVVPVSYFIRNMEESCMNLNHHGLGPMGIKAIAITLVSNTTVLKLELEDNSIQEEGILSLMEMLHENYYLQELNVSDNNLGLEGARIISDFLQENNSSLWKLKLSGNKFKEECALLLCQALSSNYRIRSLNLSHNEFSDTAGEYLGQMLALNVGLQSLNLSWNHFNVRGAVALCNGLRTNVTLKKLDVSMNGFGNDGALALGDTLKLNSCLVYVDVSRNGITNEGASRISKGLENNECLQVLKLFLNPVSLEGAYSLILAIKRNPKSRMEDLDISNVLVSEQFVKVLDGVCAIHPQLDVVYKGLQGLSTKKTVSLETNPIKLIQNYTDQNKISVVEFFKSLNPSGLMTMPVGDFRKAIIQQTNIPINRYQARELIKKLEEKNGMVNFSGFKSLKVTAAGQL</sequence>
<organism>
    <name type="scientific">Rattus norvegicus</name>
    <name type="common">Rat</name>
    <dbReference type="NCBI Taxonomy" id="10116"/>
    <lineage>
        <taxon>Eukaryota</taxon>
        <taxon>Metazoa</taxon>
        <taxon>Chordata</taxon>
        <taxon>Craniata</taxon>
        <taxon>Vertebrata</taxon>
        <taxon>Euteleostomi</taxon>
        <taxon>Mammalia</taxon>
        <taxon>Eutheria</taxon>
        <taxon>Euarchontoglires</taxon>
        <taxon>Glires</taxon>
        <taxon>Rodentia</taxon>
        <taxon>Myomorpha</taxon>
        <taxon>Muroidea</taxon>
        <taxon>Muridae</taxon>
        <taxon>Murinae</taxon>
        <taxon>Rattus</taxon>
    </lineage>
</organism>
<feature type="chain" id="PRO_0000306174" description="Leucine-rich repeat-containing protein 74A">
    <location>
        <begin position="1"/>
        <end position="479"/>
    </location>
</feature>
<feature type="repeat" description="LRR 1">
    <location>
        <begin position="119"/>
        <end position="140"/>
    </location>
</feature>
<feature type="repeat" description="LRR 2">
    <location>
        <begin position="147"/>
        <end position="167"/>
    </location>
</feature>
<feature type="repeat" description="LRR 3">
    <location>
        <begin position="176"/>
        <end position="197"/>
    </location>
</feature>
<feature type="repeat" description="LRR 4">
    <location>
        <begin position="204"/>
        <end position="225"/>
    </location>
</feature>
<feature type="repeat" description="LRR 5">
    <location>
        <begin position="232"/>
        <end position="253"/>
    </location>
</feature>
<feature type="repeat" description="LRR 6">
    <location>
        <begin position="260"/>
        <end position="281"/>
    </location>
</feature>
<feature type="repeat" description="LRR 7">
    <location>
        <begin position="288"/>
        <end position="309"/>
    </location>
</feature>
<feature type="repeat" description="LRR 8">
    <location>
        <begin position="316"/>
        <end position="336"/>
    </location>
</feature>
<feature type="region of interest" description="Disordered" evidence="2">
    <location>
        <begin position="1"/>
        <end position="29"/>
    </location>
</feature>
<feature type="compositionally biased region" description="Acidic residues" evidence="2">
    <location>
        <begin position="1"/>
        <end position="10"/>
    </location>
</feature>
<feature type="splice variant" id="VSP_028431" description="In isoform 2." evidence="3">
    <original>TNVTLK</original>
    <variation>LPSPGD</variation>
    <location>
        <begin position="257"/>
        <end position="262"/>
    </location>
</feature>
<feature type="splice variant" id="VSP_028432" description="In isoform 2." evidence="3">
    <location>
        <begin position="263"/>
        <end position="479"/>
    </location>
</feature>
<comment type="alternative products">
    <event type="alternative splicing"/>
    <isoform>
        <id>A0JPI9-1</id>
        <name>1</name>
        <sequence type="displayed"/>
    </isoform>
    <isoform>
        <id>A0JPI9-2</id>
        <name>2</name>
        <sequence type="described" ref="VSP_028431 VSP_028432"/>
    </isoform>
</comment>
<comment type="miscellaneous">
    <molecule>Isoform 2</molecule>
    <text evidence="4">May be produced at very low levels due to a premature stop codon in the mRNA, leading to nonsense-mediated mRNA decay.</text>
</comment>
<reference key="1">
    <citation type="journal article" date="2004" name="Genome Res.">
        <title>The status, quality, and expansion of the NIH full-length cDNA project: the Mammalian Gene Collection (MGC).</title>
        <authorList>
            <consortium name="The MGC Project Team"/>
        </authorList>
    </citation>
    <scope>NUCLEOTIDE SEQUENCE [LARGE SCALE MRNA] (ISOFORMS 1 AND 2)</scope>
    <source>
        <tissue>Testis</tissue>
    </source>
</reference>
<evidence type="ECO:0000250" key="1">
    <source>
        <dbReference type="UniProtKB" id="Q0VAA2"/>
    </source>
</evidence>
<evidence type="ECO:0000256" key="2">
    <source>
        <dbReference type="SAM" id="MobiDB-lite"/>
    </source>
</evidence>
<evidence type="ECO:0000303" key="3">
    <source>
    </source>
</evidence>
<evidence type="ECO:0000305" key="4"/>
<evidence type="ECO:0000312" key="5">
    <source>
        <dbReference type="RGD" id="1564488"/>
    </source>
</evidence>
<accession>A0JPI9</accession>
<accession>Q4KLZ5</accession>
<proteinExistence type="evidence at transcript level"/>
<dbReference type="EMBL" id="BC098927">
    <property type="status" value="NOT_ANNOTATED_CDS"/>
    <property type="molecule type" value="mRNA"/>
</dbReference>
<dbReference type="EMBL" id="BC127444">
    <property type="protein sequence ID" value="AAI27445.1"/>
    <property type="molecule type" value="mRNA"/>
</dbReference>
<dbReference type="RefSeq" id="NP_001032872.2">
    <molecule id="A0JPI9-1"/>
    <property type="nucleotide sequence ID" value="NM_001037783.2"/>
</dbReference>
<dbReference type="RefSeq" id="XP_063118016.1">
    <molecule id="A0JPI9-2"/>
    <property type="nucleotide sequence ID" value="XM_063261946.1"/>
</dbReference>
<dbReference type="SMR" id="A0JPI9"/>
<dbReference type="FunCoup" id="A0JPI9">
    <property type="interactions" value="13"/>
</dbReference>
<dbReference type="PhosphoSitePlus" id="A0JPI9"/>
<dbReference type="Ensembl" id="ENSRNOT00000098897.1">
    <molecule id="A0JPI9-1"/>
    <property type="protein sequence ID" value="ENSRNOP00000086029.1"/>
    <property type="gene ID" value="ENSRNOG00000052456.2"/>
</dbReference>
<dbReference type="GeneID" id="314328"/>
<dbReference type="KEGG" id="rno:314328"/>
<dbReference type="UCSC" id="RGD:1564488">
    <molecule id="A0JPI9-1"/>
    <property type="organism name" value="rat"/>
</dbReference>
<dbReference type="AGR" id="RGD:1564488"/>
<dbReference type="CTD" id="145497"/>
<dbReference type="RGD" id="1564488">
    <property type="gene designation" value="Lrrc74a"/>
</dbReference>
<dbReference type="GeneTree" id="ENSGT00940000154297"/>
<dbReference type="InParanoid" id="A0JPI9"/>
<dbReference type="OMA" id="PINRYQV"/>
<dbReference type="OrthoDB" id="120976at2759"/>
<dbReference type="PhylomeDB" id="A0JPI9"/>
<dbReference type="PRO" id="PR:A0JPI9"/>
<dbReference type="Proteomes" id="UP000002494">
    <property type="component" value="Chromosome 6"/>
</dbReference>
<dbReference type="Gene3D" id="3.80.10.10">
    <property type="entry name" value="Ribonuclease Inhibitor"/>
    <property type="match status" value="1"/>
</dbReference>
<dbReference type="InterPro" id="IPR001611">
    <property type="entry name" value="Leu-rich_rpt"/>
</dbReference>
<dbReference type="InterPro" id="IPR052394">
    <property type="entry name" value="LRR-containing"/>
</dbReference>
<dbReference type="InterPro" id="IPR032675">
    <property type="entry name" value="LRR_dom_sf"/>
</dbReference>
<dbReference type="PANTHER" id="PTHR24114">
    <property type="entry name" value="LEUCINE RICH REPEAT FAMILY PROTEIN"/>
    <property type="match status" value="1"/>
</dbReference>
<dbReference type="PANTHER" id="PTHR24114:SF49">
    <property type="entry name" value="LEUCINE-RICH REPEAT-CONTAINING PROTEIN 74A"/>
    <property type="match status" value="1"/>
</dbReference>
<dbReference type="Pfam" id="PF13516">
    <property type="entry name" value="LRR_6"/>
    <property type="match status" value="7"/>
</dbReference>
<dbReference type="SMART" id="SM00368">
    <property type="entry name" value="LRR_RI"/>
    <property type="match status" value="8"/>
</dbReference>
<dbReference type="SUPFAM" id="SSF52047">
    <property type="entry name" value="RNI-like"/>
    <property type="match status" value="1"/>
</dbReference>
<protein>
    <recommendedName>
        <fullName evidence="1">Leucine-rich repeat-containing protein 74A</fullName>
    </recommendedName>
    <alternativeName>
        <fullName evidence="5">Leucine-rich repeat-containing protein 74</fullName>
    </alternativeName>
</protein>
<gene>
    <name evidence="1" type="primary">Lrrc74a</name>
    <name evidence="5" type="synonym">Lrrc74</name>
</gene>